<evidence type="ECO:0000250" key="1"/>
<evidence type="ECO:0000255" key="2"/>
<evidence type="ECO:0000269" key="3">
    <source>
    </source>
</evidence>
<evidence type="ECO:0000303" key="4">
    <source>
    </source>
</evidence>
<evidence type="ECO:0000305" key="5"/>
<evidence type="ECO:0007829" key="6">
    <source>
        <dbReference type="PDB" id="6JDK"/>
    </source>
</evidence>
<dbReference type="EC" id="1.14.13.-" evidence="3"/>
<dbReference type="EMBL" id="CP000774">
    <property type="protein sequence ID" value="ABS63399.1"/>
    <property type="molecule type" value="Genomic_DNA"/>
</dbReference>
<dbReference type="RefSeq" id="WP_012110692.1">
    <property type="nucleotide sequence ID" value="NC_009719.1"/>
</dbReference>
<dbReference type="PDB" id="6JDK">
    <property type="method" value="X-ray"/>
    <property type="resolution" value="2.50 A"/>
    <property type="chains" value="A/B=1-544"/>
</dbReference>
<dbReference type="PDBsum" id="6JDK"/>
<dbReference type="SMR" id="A7HU16"/>
<dbReference type="STRING" id="402881.Plav_1781"/>
<dbReference type="KEGG" id="pla:Plav_1781"/>
<dbReference type="eggNOG" id="COG2072">
    <property type="taxonomic scope" value="Bacteria"/>
</dbReference>
<dbReference type="HOGENOM" id="CLU_006937_8_0_5"/>
<dbReference type="OrthoDB" id="9773233at2"/>
<dbReference type="Proteomes" id="UP000006377">
    <property type="component" value="Chromosome"/>
</dbReference>
<dbReference type="GO" id="GO:0050660">
    <property type="term" value="F:flavin adenine dinucleotide binding"/>
    <property type="evidence" value="ECO:0007669"/>
    <property type="project" value="InterPro"/>
</dbReference>
<dbReference type="GO" id="GO:0004499">
    <property type="term" value="F:N,N-dimethylaniline monooxygenase activity"/>
    <property type="evidence" value="ECO:0007669"/>
    <property type="project" value="InterPro"/>
</dbReference>
<dbReference type="GO" id="GO:0050661">
    <property type="term" value="F:NADP binding"/>
    <property type="evidence" value="ECO:0007669"/>
    <property type="project" value="InterPro"/>
</dbReference>
<dbReference type="Gene3D" id="3.50.50.60">
    <property type="entry name" value="FAD/NAD(P)-binding domain"/>
    <property type="match status" value="2"/>
</dbReference>
<dbReference type="InterPro" id="IPR050775">
    <property type="entry name" value="FAD-binding_Monooxygenases"/>
</dbReference>
<dbReference type="InterPro" id="IPR036188">
    <property type="entry name" value="FAD/NAD-bd_sf"/>
</dbReference>
<dbReference type="InterPro" id="IPR020946">
    <property type="entry name" value="Flavin_mOase-like"/>
</dbReference>
<dbReference type="PANTHER" id="PTHR43098">
    <property type="entry name" value="L-ORNITHINE N(5)-MONOOXYGENASE-RELATED"/>
    <property type="match status" value="1"/>
</dbReference>
<dbReference type="PANTHER" id="PTHR43098:SF3">
    <property type="entry name" value="L-ORNITHINE N(5)-MONOOXYGENASE-RELATED"/>
    <property type="match status" value="1"/>
</dbReference>
<dbReference type="Pfam" id="PF00743">
    <property type="entry name" value="FMO-like"/>
    <property type="match status" value="1"/>
</dbReference>
<dbReference type="SUPFAM" id="SSF51905">
    <property type="entry name" value="FAD/NAD(P)-binding domain"/>
    <property type="match status" value="2"/>
</dbReference>
<gene>
    <name type="ordered locus">Plav_1781</name>
</gene>
<comment type="function">
    <text evidence="3">Catalyzes a Baeyer-Villiger oxidation reaction, i.e. the insertion of an oxygen atom into a carbon-carbon bond adjacent to a carbonyl, which converts ketones to esters or lactones using NADPH as an electron donor. Besides cycloalkanones, can use cyclic alpha,beta-unsaturated ketones as substrates, leading to enol-lactones. Can also act on methylated cycloalkanones and methylated cycloalkenones with high enantioselectivity in some cases.</text>
</comment>
<comment type="cofactor">
    <cofactor evidence="3">
        <name>FAD</name>
        <dbReference type="ChEBI" id="CHEBI:57692"/>
    </cofactor>
</comment>
<comment type="biotechnology">
    <text evidence="3">This enzyme offers a promising route for the synthesis of chiral enol-lactones, when expressed in an engineered strain deprived of enone reductase activity.</text>
</comment>
<comment type="miscellaneous">
    <text>Displays a different regioselectivity from O.batsensis BVMO.</text>
</comment>
<comment type="similarity">
    <text evidence="5">Belongs to the FAD-binding monooxygenase family.</text>
</comment>
<accession>A7HU16</accession>
<proteinExistence type="evidence at protein level"/>
<sequence>MSSVQSSQTQKNDDAEVFDALIVGAGFNGIYQLHRLRQEGFKVRLFEAGADMGGIWYWNCYPGARVDSHIPIYEFSIEELWRDWNWTERFPAWDELRRYFHYVDKKLDLSRDIRFGMRVSAAEFDEARDQWVIRTTDGTVVRARFFILCTGFASKPYIPNYKGLESFAGESFHTGLWPQEGASFTGKRVGVVGTGASGVQVVQEASKDAAHLTVFQRTPILALPMQQRKLDVETQQRMKADYPEIFRIRRETFGGFDILRDERSALEVPPEERCALYEKLWQKGGFHYWIGGFSDILTNEEANRTMYDFWRDKTRARIKNPALADKLAPMEPPHPFGVKRPSLEQWYYEAFNQDNVSLVDVREMPIVEIVPEGVLTSDGLVELDMLVLATGFDAVTGGLTQIDIHGTGGITLKEKWTEGARTYLGFATSGFPNMLFLYGPQSPSGFCNGPTCAEMQGEWVVDCLKHMRENNKGRIEATAQAEEEWAQLLNSIAGMTLFPRADSWYMGANIPGKPRQLLNFPGVPIYMDQCNTAAAKDYEGFVLD</sequence>
<organism>
    <name type="scientific">Parvibaculum lavamentivorans (strain DS-1 / DSM 13023 / NCIMB 13966)</name>
    <dbReference type="NCBI Taxonomy" id="402881"/>
    <lineage>
        <taxon>Bacteria</taxon>
        <taxon>Pseudomonadati</taxon>
        <taxon>Pseudomonadota</taxon>
        <taxon>Alphaproteobacteria</taxon>
        <taxon>Hyphomicrobiales</taxon>
        <taxon>Parvibaculaceae</taxon>
        <taxon>Parvibaculum</taxon>
    </lineage>
</organism>
<keyword id="KW-0002">3D-structure</keyword>
<keyword id="KW-0274">FAD</keyword>
<keyword id="KW-0285">Flavoprotein</keyword>
<keyword id="KW-0503">Monooxygenase</keyword>
<keyword id="KW-0521">NADP</keyword>
<keyword id="KW-0560">Oxidoreductase</keyword>
<keyword id="KW-1185">Reference proteome</keyword>
<feature type="chain" id="PRO_0000430341" description="Baeyer-Villiger monooxygenase">
    <location>
        <begin position="1"/>
        <end position="544"/>
    </location>
</feature>
<feature type="binding site" evidence="1">
    <location>
        <position position="27"/>
    </location>
    <ligand>
        <name>FAD</name>
        <dbReference type="ChEBI" id="CHEBI:57692"/>
    </ligand>
</feature>
<feature type="binding site" evidence="1">
    <location>
        <position position="47"/>
    </location>
    <ligand>
        <name>FAD</name>
        <dbReference type="ChEBI" id="CHEBI:57692"/>
    </ligand>
</feature>
<feature type="binding site" evidence="1">
    <location>
        <position position="56"/>
    </location>
    <ligand>
        <name>FAD</name>
        <dbReference type="ChEBI" id="CHEBI:57692"/>
    </ligand>
</feature>
<feature type="binding site" evidence="1">
    <location>
        <position position="67"/>
    </location>
    <ligand>
        <name>FAD</name>
        <dbReference type="ChEBI" id="CHEBI:57692"/>
    </ligand>
</feature>
<feature type="binding site" evidence="1">
    <location>
        <position position="73"/>
    </location>
    <ligand>
        <name>FAD</name>
        <dbReference type="ChEBI" id="CHEBI:57692"/>
    </ligand>
</feature>
<feature type="binding site" evidence="1">
    <location>
        <position position="119"/>
    </location>
    <ligand>
        <name>FAD</name>
        <dbReference type="ChEBI" id="CHEBI:57692"/>
    </ligand>
</feature>
<feature type="site" description="Transition state stabilizer" evidence="2">
    <location>
        <position position="340"/>
    </location>
</feature>
<feature type="strand" evidence="6">
    <location>
        <begin position="17"/>
        <end position="23"/>
    </location>
</feature>
<feature type="helix" evidence="6">
    <location>
        <begin position="27"/>
        <end position="38"/>
    </location>
</feature>
<feature type="strand" evidence="6">
    <location>
        <begin position="43"/>
        <end position="52"/>
    </location>
</feature>
<feature type="helix" evidence="6">
    <location>
        <begin position="55"/>
        <end position="58"/>
    </location>
</feature>
<feature type="turn" evidence="6">
    <location>
        <begin position="70"/>
        <end position="72"/>
    </location>
</feature>
<feature type="helix" evidence="6">
    <location>
        <begin position="78"/>
        <end position="81"/>
    </location>
</feature>
<feature type="strand" evidence="6">
    <location>
        <begin position="87"/>
        <end position="90"/>
    </location>
</feature>
<feature type="helix" evidence="6">
    <location>
        <begin position="93"/>
        <end position="107"/>
    </location>
</feature>
<feature type="helix" evidence="6">
    <location>
        <begin position="110"/>
        <end position="112"/>
    </location>
</feature>
<feature type="strand" evidence="6">
    <location>
        <begin position="113"/>
        <end position="115"/>
    </location>
</feature>
<feature type="strand" evidence="6">
    <location>
        <begin position="119"/>
        <end position="125"/>
    </location>
</feature>
<feature type="helix" evidence="6">
    <location>
        <begin position="126"/>
        <end position="128"/>
    </location>
</feature>
<feature type="strand" evidence="6">
    <location>
        <begin position="130"/>
        <end position="135"/>
    </location>
</feature>
<feature type="strand" evidence="6">
    <location>
        <begin position="140"/>
        <end position="148"/>
    </location>
</feature>
<feature type="strand" evidence="6">
    <location>
        <begin position="154"/>
        <end position="156"/>
    </location>
</feature>
<feature type="helix" evidence="6">
    <location>
        <begin position="164"/>
        <end position="166"/>
    </location>
</feature>
<feature type="strand" evidence="6">
    <location>
        <begin position="169"/>
        <end position="173"/>
    </location>
</feature>
<feature type="helix" evidence="6">
    <location>
        <begin position="174"/>
        <end position="176"/>
    </location>
</feature>
<feature type="strand" evidence="6">
    <location>
        <begin position="188"/>
        <end position="192"/>
    </location>
</feature>
<feature type="helix" evidence="6">
    <location>
        <begin position="196"/>
        <end position="208"/>
    </location>
</feature>
<feature type="strand" evidence="6">
    <location>
        <begin position="210"/>
        <end position="218"/>
    </location>
</feature>
<feature type="helix" evidence="6">
    <location>
        <begin position="232"/>
        <end position="238"/>
    </location>
</feature>
<feature type="helix" evidence="6">
    <location>
        <begin position="242"/>
        <end position="249"/>
    </location>
</feature>
<feature type="strand" evidence="6">
    <location>
        <begin position="255"/>
        <end position="257"/>
    </location>
</feature>
<feature type="helix" evidence="6">
    <location>
        <begin position="270"/>
        <end position="283"/>
    </location>
</feature>
<feature type="helix" evidence="6">
    <location>
        <begin position="287"/>
        <end position="290"/>
    </location>
</feature>
<feature type="strand" evidence="6">
    <location>
        <begin position="291"/>
        <end position="293"/>
    </location>
</feature>
<feature type="turn" evidence="6">
    <location>
        <begin position="294"/>
        <end position="298"/>
    </location>
</feature>
<feature type="helix" evidence="6">
    <location>
        <begin position="300"/>
        <end position="317"/>
    </location>
</feature>
<feature type="helix" evidence="6">
    <location>
        <begin position="321"/>
        <end position="327"/>
    </location>
</feature>
<feature type="strand" evidence="6">
    <location>
        <begin position="343"/>
        <end position="346"/>
    </location>
</feature>
<feature type="helix" evidence="6">
    <location>
        <begin position="347"/>
        <end position="350"/>
    </location>
</feature>
<feature type="strand" evidence="6">
    <location>
        <begin position="356"/>
        <end position="360"/>
    </location>
</feature>
<feature type="turn" evidence="6">
    <location>
        <begin position="361"/>
        <end position="363"/>
    </location>
</feature>
<feature type="strand" evidence="6">
    <location>
        <begin position="366"/>
        <end position="370"/>
    </location>
</feature>
<feature type="strand" evidence="6">
    <location>
        <begin position="373"/>
        <end position="376"/>
    </location>
</feature>
<feature type="strand" evidence="6">
    <location>
        <begin position="379"/>
        <end position="382"/>
    </location>
</feature>
<feature type="strand" evidence="6">
    <location>
        <begin position="384"/>
        <end position="388"/>
    </location>
</feature>
<feature type="helix" evidence="6">
    <location>
        <begin position="395"/>
        <end position="399"/>
    </location>
</feature>
<feature type="strand" evidence="6">
    <location>
        <begin position="402"/>
        <end position="405"/>
    </location>
</feature>
<feature type="strand" evidence="6">
    <location>
        <begin position="409"/>
        <end position="411"/>
    </location>
</feature>
<feature type="helix" evidence="6">
    <location>
        <begin position="412"/>
        <end position="415"/>
    </location>
</feature>
<feature type="turn" evidence="6">
    <location>
        <begin position="424"/>
        <end position="426"/>
    </location>
</feature>
<feature type="strand" evidence="6">
    <location>
        <begin position="434"/>
        <end position="438"/>
    </location>
</feature>
<feature type="helix" evidence="6">
    <location>
        <begin position="444"/>
        <end position="446"/>
    </location>
</feature>
<feature type="helix" evidence="6">
    <location>
        <begin position="449"/>
        <end position="469"/>
    </location>
</feature>
<feature type="strand" evidence="6">
    <location>
        <begin position="475"/>
        <end position="477"/>
    </location>
</feature>
<feature type="helix" evidence="6">
    <location>
        <begin position="479"/>
        <end position="493"/>
    </location>
</feature>
<feature type="helix" evidence="6">
    <location>
        <begin position="498"/>
        <end position="500"/>
    </location>
</feature>
<feature type="helix" evidence="6">
    <location>
        <begin position="523"/>
        <end position="535"/>
    </location>
</feature>
<feature type="strand" evidence="6">
    <location>
        <begin position="541"/>
        <end position="543"/>
    </location>
</feature>
<protein>
    <recommendedName>
        <fullName evidence="4">Baeyer-Villiger monooxygenase</fullName>
        <shortName evidence="5">BVMO</shortName>
        <ecNumber evidence="3">1.14.13.-</ecNumber>
    </recommendedName>
</protein>
<reference key="1">
    <citation type="journal article" date="2011" name="Stand. Genomic Sci.">
        <title>Complete genome sequence of Parvibaculum lavamentivorans type strain (DS-1(T)).</title>
        <authorList>
            <person name="Schleheck D."/>
            <person name="Weiss M."/>
            <person name="Pitluck S."/>
            <person name="Bruce D."/>
            <person name="Land M.L."/>
            <person name="Han S."/>
            <person name="Saunders E."/>
            <person name="Tapia R."/>
            <person name="Detter C."/>
            <person name="Brettin T."/>
            <person name="Han J."/>
            <person name="Woyke T."/>
            <person name="Goodwin L."/>
            <person name="Pennacchio L."/>
            <person name="Nolan M."/>
            <person name="Cook A.M."/>
            <person name="Kjelleberg S."/>
            <person name="Thomas T."/>
        </authorList>
    </citation>
    <scope>NUCLEOTIDE SEQUENCE [LARGE SCALE GENOMIC DNA]</scope>
    <source>
        <strain>DS-1 / DSM 13023 / NCIMB 13966</strain>
    </source>
</reference>
<reference key="2">
    <citation type="journal article" date="2014" name="Chem. Commun. (Camb.)">
        <title>Broadening the scope of Baeyer-Villiger monooxygenase activities toward alpha,beta-unsaturated ketones: a promising route to chiral enol-lactones and ene-lactones.</title>
        <authorList>
            <person name="Reignier T."/>
            <person name="de Berardinis V."/>
            <person name="Petit J.L."/>
            <person name="Mariage A."/>
            <person name="Hamze K."/>
            <person name="Duquesne K."/>
            <person name="Alphand V."/>
        </authorList>
    </citation>
    <scope>FUNCTION</scope>
    <scope>CATALYTIC ACTIVITY</scope>
    <scope>SUBSTRATE SPECIFICITY</scope>
    <scope>COFACTOR</scope>
    <scope>BIOTECHNOLOGY</scope>
    <source>
        <strain>DS-1 / DSM 13023 / NCIMB 13966</strain>
    </source>
</reference>
<name>BVMO_PARL1</name>